<proteinExistence type="inferred from homology"/>
<comment type="function">
    <text evidence="4">Has antibacterial activity.</text>
</comment>
<comment type="subcellular location">
    <subcellularLocation>
        <location evidence="4">Secreted</location>
    </subcellularLocation>
</comment>
<comment type="similarity">
    <text evidence="4">Belongs to the beta-defensin family.</text>
</comment>
<keyword id="KW-0044">Antibiotic</keyword>
<keyword id="KW-0929">Antimicrobial</keyword>
<keyword id="KW-0211">Defensin</keyword>
<keyword id="KW-1015">Disulfide bond</keyword>
<keyword id="KW-1185">Reference proteome</keyword>
<keyword id="KW-0964">Secreted</keyword>
<keyword id="KW-0732">Signal</keyword>
<name>DB129_MACFA</name>
<evidence type="ECO:0000250" key="1"/>
<evidence type="ECO:0000255" key="2"/>
<evidence type="ECO:0000256" key="3">
    <source>
        <dbReference type="SAM" id="MobiDB-lite"/>
    </source>
</evidence>
<evidence type="ECO:0000305" key="4"/>
<reference key="1">
    <citation type="submission" date="2006-11" db="EMBL/GenBank/DDBJ databases">
        <title>Evolution and sequence variation of human beta-defensin genes.</title>
        <authorList>
            <person name="Hollox E.J."/>
            <person name="Armour J.A.L."/>
        </authorList>
    </citation>
    <scope>NUCLEOTIDE SEQUENCE [GENOMIC DNA]</scope>
</reference>
<sequence>MKLLFPIFASLMLQYQVNTEFIGLRSCLMGFGRCRDHCNVDEKEIQKCKMKKCCVGPKVVKLIKNYLQYGTPNVLNEDVQEMLKPAENSSAVIQRKHILSILPQIKSINFFANTNLVIIPNATPVNSATVSTMTSGQITYTATSAKSNTKESGDSATASPPPAPPPPNILPTPSLELEEAEEQ</sequence>
<accession>A4H260</accession>
<dbReference type="EMBL" id="AM410165">
    <property type="protein sequence ID" value="CAL68975.1"/>
    <property type="molecule type" value="Genomic_DNA"/>
</dbReference>
<dbReference type="SMR" id="A4H260"/>
<dbReference type="STRING" id="9541.ENSMFAP00000013584"/>
<dbReference type="eggNOG" id="ENOG502TDUT">
    <property type="taxonomic scope" value="Eukaryota"/>
</dbReference>
<dbReference type="Proteomes" id="UP000233100">
    <property type="component" value="Unplaced"/>
</dbReference>
<dbReference type="GO" id="GO:0005576">
    <property type="term" value="C:extracellular region"/>
    <property type="evidence" value="ECO:0007669"/>
    <property type="project" value="UniProtKB-SubCell"/>
</dbReference>
<dbReference type="GO" id="GO:0042742">
    <property type="term" value="P:defense response to bacterium"/>
    <property type="evidence" value="ECO:0007669"/>
    <property type="project" value="UniProtKB-KW"/>
</dbReference>
<feature type="signal peptide" evidence="2">
    <location>
        <begin position="1"/>
        <end position="19"/>
    </location>
</feature>
<feature type="chain" id="PRO_0000289856" description="Beta-defensin 129">
    <location>
        <begin position="20"/>
        <end position="183"/>
    </location>
</feature>
<feature type="region of interest" description="Disordered" evidence="3">
    <location>
        <begin position="142"/>
        <end position="183"/>
    </location>
</feature>
<feature type="compositionally biased region" description="Pro residues" evidence="3">
    <location>
        <begin position="159"/>
        <end position="170"/>
    </location>
</feature>
<feature type="disulfide bond" evidence="1">
    <location>
        <begin position="27"/>
        <end position="53"/>
    </location>
</feature>
<feature type="disulfide bond" evidence="1">
    <location>
        <begin position="34"/>
        <end position="48"/>
    </location>
</feature>
<feature type="disulfide bond" evidence="1">
    <location>
        <begin position="38"/>
        <end position="54"/>
    </location>
</feature>
<protein>
    <recommendedName>
        <fullName>Beta-defensin 129</fullName>
    </recommendedName>
    <alternativeName>
        <fullName>Defensin, beta 129</fullName>
    </alternativeName>
</protein>
<organism>
    <name type="scientific">Macaca fascicularis</name>
    <name type="common">Crab-eating macaque</name>
    <name type="synonym">Cynomolgus monkey</name>
    <dbReference type="NCBI Taxonomy" id="9541"/>
    <lineage>
        <taxon>Eukaryota</taxon>
        <taxon>Metazoa</taxon>
        <taxon>Chordata</taxon>
        <taxon>Craniata</taxon>
        <taxon>Vertebrata</taxon>
        <taxon>Euteleostomi</taxon>
        <taxon>Mammalia</taxon>
        <taxon>Eutheria</taxon>
        <taxon>Euarchontoglires</taxon>
        <taxon>Primates</taxon>
        <taxon>Haplorrhini</taxon>
        <taxon>Catarrhini</taxon>
        <taxon>Cercopithecidae</taxon>
        <taxon>Cercopithecinae</taxon>
        <taxon>Macaca</taxon>
    </lineage>
</organism>
<gene>
    <name type="primary">DEFB129</name>
</gene>